<dbReference type="EMBL" id="CU329672">
    <property type="protein sequence ID" value="CAA20669.1"/>
    <property type="molecule type" value="Genomic_DNA"/>
</dbReference>
<dbReference type="PIR" id="T41060">
    <property type="entry name" value="T41060"/>
</dbReference>
<dbReference type="RefSeq" id="NP_587796.1">
    <property type="nucleotide sequence ID" value="NM_001022789.2"/>
</dbReference>
<dbReference type="BioGRID" id="275443">
    <property type="interactions" value="4"/>
</dbReference>
<dbReference type="iPTMnet" id="O74434"/>
<dbReference type="PaxDb" id="4896-SPCC1682.03c.1"/>
<dbReference type="EnsemblFungi" id="SPCC1682.03c.1">
    <property type="protein sequence ID" value="SPCC1682.03c.1:pep"/>
    <property type="gene ID" value="SPCC1682.03c"/>
</dbReference>
<dbReference type="PomBase" id="SPCC1682.03c">
    <property type="gene designation" value="mug174"/>
</dbReference>
<dbReference type="VEuPathDB" id="FungiDB:SPCC1682.03c"/>
<dbReference type="HOGENOM" id="CLU_436901_0_0_1"/>
<dbReference type="InParanoid" id="O74434"/>
<dbReference type="OMA" id="WIHTAEL"/>
<dbReference type="PRO" id="PR:O74434"/>
<dbReference type="Proteomes" id="UP000002485">
    <property type="component" value="Chromosome III"/>
</dbReference>
<dbReference type="GO" id="GO:0015030">
    <property type="term" value="C:Cajal body"/>
    <property type="evidence" value="ECO:0000314"/>
    <property type="project" value="UniProtKB"/>
</dbReference>
<dbReference type="GO" id="GO:0005737">
    <property type="term" value="C:cytoplasm"/>
    <property type="evidence" value="ECO:0007005"/>
    <property type="project" value="PomBase"/>
</dbReference>
<dbReference type="GO" id="GO:0005634">
    <property type="term" value="C:nucleus"/>
    <property type="evidence" value="ECO:0007005"/>
    <property type="project" value="PomBase"/>
</dbReference>
<dbReference type="GO" id="GO:0003723">
    <property type="term" value="F:RNA binding"/>
    <property type="evidence" value="ECO:0007669"/>
    <property type="project" value="UniProtKB-KW"/>
</dbReference>
<dbReference type="GO" id="GO:0051321">
    <property type="term" value="P:meiotic cell cycle"/>
    <property type="evidence" value="ECO:0007669"/>
    <property type="project" value="UniProtKB-KW"/>
</dbReference>
<dbReference type="GO" id="GO:0000387">
    <property type="term" value="P:spliceosomal snRNP assembly"/>
    <property type="evidence" value="ECO:0000315"/>
    <property type="project" value="UniProtKB"/>
</dbReference>
<accession>O74434</accession>
<gene>
    <name evidence="8" type="primary">mug174</name>
    <name evidence="8" type="ORF">SPCC1682.03c</name>
</gene>
<proteinExistence type="evidence at protein level"/>
<evidence type="ECO:0000256" key="1">
    <source>
        <dbReference type="SAM" id="MobiDB-lite"/>
    </source>
</evidence>
<evidence type="ECO:0000269" key="2">
    <source>
    </source>
</evidence>
<evidence type="ECO:0000269" key="3">
    <source>
    </source>
</evidence>
<evidence type="ECO:0000269" key="4">
    <source>
    </source>
</evidence>
<evidence type="ECO:0000269" key="5">
    <source>
    </source>
</evidence>
<evidence type="ECO:0000303" key="6">
    <source>
    </source>
</evidence>
<evidence type="ECO:0000305" key="7"/>
<evidence type="ECO:0000312" key="8">
    <source>
        <dbReference type="PomBase" id="SPCC1682.03c"/>
    </source>
</evidence>
<organism>
    <name type="scientific">Schizosaccharomyces pombe (strain 972 / ATCC 24843)</name>
    <name type="common">Fission yeast</name>
    <dbReference type="NCBI Taxonomy" id="284812"/>
    <lineage>
        <taxon>Eukaryota</taxon>
        <taxon>Fungi</taxon>
        <taxon>Dikarya</taxon>
        <taxon>Ascomycota</taxon>
        <taxon>Taphrinomycotina</taxon>
        <taxon>Schizosaccharomycetes</taxon>
        <taxon>Schizosaccharomycetales</taxon>
        <taxon>Schizosaccharomycetaceae</taxon>
        <taxon>Schizosaccharomyces</taxon>
    </lineage>
</organism>
<reference key="1">
    <citation type="journal article" date="2002" name="Nature">
        <title>The genome sequence of Schizosaccharomyces pombe.</title>
        <authorList>
            <person name="Wood V."/>
            <person name="Gwilliam R."/>
            <person name="Rajandream M.A."/>
            <person name="Lyne M.H."/>
            <person name="Lyne R."/>
            <person name="Stewart A."/>
            <person name="Sgouros J.G."/>
            <person name="Peat N."/>
            <person name="Hayles J."/>
            <person name="Baker S.G."/>
            <person name="Basham D."/>
            <person name="Bowman S."/>
            <person name="Brooks K."/>
            <person name="Brown D."/>
            <person name="Brown S."/>
            <person name="Chillingworth T."/>
            <person name="Churcher C.M."/>
            <person name="Collins M."/>
            <person name="Connor R."/>
            <person name="Cronin A."/>
            <person name="Davis P."/>
            <person name="Feltwell T."/>
            <person name="Fraser A."/>
            <person name="Gentles S."/>
            <person name="Goble A."/>
            <person name="Hamlin N."/>
            <person name="Harris D.E."/>
            <person name="Hidalgo J."/>
            <person name="Hodgson G."/>
            <person name="Holroyd S."/>
            <person name="Hornsby T."/>
            <person name="Howarth S."/>
            <person name="Huckle E.J."/>
            <person name="Hunt S."/>
            <person name="Jagels K."/>
            <person name="James K.D."/>
            <person name="Jones L."/>
            <person name="Jones M."/>
            <person name="Leather S."/>
            <person name="McDonald S."/>
            <person name="McLean J."/>
            <person name="Mooney P."/>
            <person name="Moule S."/>
            <person name="Mungall K.L."/>
            <person name="Murphy L.D."/>
            <person name="Niblett D."/>
            <person name="Odell C."/>
            <person name="Oliver K."/>
            <person name="O'Neil S."/>
            <person name="Pearson D."/>
            <person name="Quail M.A."/>
            <person name="Rabbinowitsch E."/>
            <person name="Rutherford K.M."/>
            <person name="Rutter S."/>
            <person name="Saunders D."/>
            <person name="Seeger K."/>
            <person name="Sharp S."/>
            <person name="Skelton J."/>
            <person name="Simmonds M.N."/>
            <person name="Squares R."/>
            <person name="Squares S."/>
            <person name="Stevens K."/>
            <person name="Taylor K."/>
            <person name="Taylor R.G."/>
            <person name="Tivey A."/>
            <person name="Walsh S.V."/>
            <person name="Warren T."/>
            <person name="Whitehead S."/>
            <person name="Woodward J.R."/>
            <person name="Volckaert G."/>
            <person name="Aert R."/>
            <person name="Robben J."/>
            <person name="Grymonprez B."/>
            <person name="Weltjens I."/>
            <person name="Vanstreels E."/>
            <person name="Rieger M."/>
            <person name="Schaefer M."/>
            <person name="Mueller-Auer S."/>
            <person name="Gabel C."/>
            <person name="Fuchs M."/>
            <person name="Duesterhoeft A."/>
            <person name="Fritzc C."/>
            <person name="Holzer E."/>
            <person name="Moestl D."/>
            <person name="Hilbert H."/>
            <person name="Borzym K."/>
            <person name="Langer I."/>
            <person name="Beck A."/>
            <person name="Lehrach H."/>
            <person name="Reinhardt R."/>
            <person name="Pohl T.M."/>
            <person name="Eger P."/>
            <person name="Zimmermann W."/>
            <person name="Wedler H."/>
            <person name="Wambutt R."/>
            <person name="Purnelle B."/>
            <person name="Goffeau A."/>
            <person name="Cadieu E."/>
            <person name="Dreano S."/>
            <person name="Gloux S."/>
            <person name="Lelaure V."/>
            <person name="Mottier S."/>
            <person name="Galibert F."/>
            <person name="Aves S.J."/>
            <person name="Xiang Z."/>
            <person name="Hunt C."/>
            <person name="Moore K."/>
            <person name="Hurst S.M."/>
            <person name="Lucas M."/>
            <person name="Rochet M."/>
            <person name="Gaillardin C."/>
            <person name="Tallada V.A."/>
            <person name="Garzon A."/>
            <person name="Thode G."/>
            <person name="Daga R.R."/>
            <person name="Cruzado L."/>
            <person name="Jimenez J."/>
            <person name="Sanchez M."/>
            <person name="del Rey F."/>
            <person name="Benito J."/>
            <person name="Dominguez A."/>
            <person name="Revuelta J.L."/>
            <person name="Moreno S."/>
            <person name="Armstrong J."/>
            <person name="Forsburg S.L."/>
            <person name="Cerutti L."/>
            <person name="Lowe T."/>
            <person name="McCombie W.R."/>
            <person name="Paulsen I."/>
            <person name="Potashkin J."/>
            <person name="Shpakovski G.V."/>
            <person name="Ussery D."/>
            <person name="Barrell B.G."/>
            <person name="Nurse P."/>
        </authorList>
    </citation>
    <scope>NUCLEOTIDE SEQUENCE [LARGE SCALE GENOMIC DNA]</scope>
    <source>
        <strain>972 / ATCC 24843</strain>
    </source>
</reference>
<reference key="2">
    <citation type="journal article" date="2005" name="Curr. Biol.">
        <title>A large-scale screen in S. pombe identifies seven novel genes required for critical meiotic events.</title>
        <authorList>
            <person name="Martin-Castellanos C."/>
            <person name="Blanco M."/>
            <person name="Rozalen A.E."/>
            <person name="Perez-Hidalgo L."/>
            <person name="Garcia A.I."/>
            <person name="Conde F."/>
            <person name="Mata J."/>
            <person name="Ellermeier C."/>
            <person name="Davis L."/>
            <person name="San-Segundo P."/>
            <person name="Smith G.R."/>
            <person name="Moreno S."/>
        </authorList>
    </citation>
    <scope>DISRUPTION PHENOTYPE</scope>
</reference>
<reference key="3">
    <citation type="journal article" date="2006" name="Nat. Biotechnol.">
        <title>ORFeome cloning and global analysis of protein localization in the fission yeast Schizosaccharomyces pombe.</title>
        <authorList>
            <person name="Matsuyama A."/>
            <person name="Arai R."/>
            <person name="Yashiroda Y."/>
            <person name="Shirai A."/>
            <person name="Kamata A."/>
            <person name="Sekido S."/>
            <person name="Kobayashi Y."/>
            <person name="Hashimoto A."/>
            <person name="Hamamoto M."/>
            <person name="Hiraoka Y."/>
            <person name="Horinouchi S."/>
            <person name="Yoshida M."/>
        </authorList>
    </citation>
    <scope>SUBCELLULAR LOCATION [LARGE SCALE ANALYSIS]</scope>
</reference>
<reference key="4">
    <citation type="journal article" date="2008" name="J. Proteome Res.">
        <title>Phosphoproteome analysis of fission yeast.</title>
        <authorList>
            <person name="Wilson-Grady J.T."/>
            <person name="Villen J."/>
            <person name="Gygi S.P."/>
        </authorList>
    </citation>
    <scope>PHOSPHORYLATION [LARGE SCALE ANALYSIS] AT SER-148 AND SER-162</scope>
    <scope>IDENTIFICATION BY MASS SPECTROMETRY</scope>
</reference>
<reference key="5">
    <citation type="journal article" date="2024" name="Nucleic Acids Res.">
        <title>The fission yeast ortholog of Coilin, Mug174, forms Cajal body-like nuclear condensates and is essential for cellular quiescence.</title>
        <authorList>
            <person name="Deng X."/>
            <person name="Yao Q."/>
            <person name="Horvath A."/>
            <person name="Jiang Z."/>
            <person name="Zhao J."/>
            <person name="Fischer T."/>
            <person name="Sugiyama T."/>
        </authorList>
    </citation>
    <scope>FUNCTION</scope>
    <scope>INTERACTION WITH TGS1 AND U2/U5 SNRNAS</scope>
    <scope>SUBCELLULAR LOCATION</scope>
    <scope>DISRUPTION PHENOTYPE</scope>
</reference>
<keyword id="KW-0963">Cytoplasm</keyword>
<keyword id="KW-0469">Meiosis</keyword>
<keyword id="KW-0507">mRNA processing</keyword>
<keyword id="KW-0508">mRNA splicing</keyword>
<keyword id="KW-0539">Nucleus</keyword>
<keyword id="KW-0597">Phosphoprotein</keyword>
<keyword id="KW-1185">Reference proteome</keyword>
<keyword id="KW-0694">RNA-binding</keyword>
<feature type="chain" id="PRO_0000278518" description="Coilin">
    <location>
        <begin position="1"/>
        <end position="626"/>
    </location>
</feature>
<feature type="region of interest" description="Disordered" evidence="1">
    <location>
        <begin position="253"/>
        <end position="309"/>
    </location>
</feature>
<feature type="region of interest" description="Disordered" evidence="1">
    <location>
        <begin position="382"/>
        <end position="433"/>
    </location>
</feature>
<feature type="compositionally biased region" description="Low complexity" evidence="1">
    <location>
        <begin position="260"/>
        <end position="292"/>
    </location>
</feature>
<feature type="compositionally biased region" description="Basic and acidic residues" evidence="1">
    <location>
        <begin position="382"/>
        <end position="395"/>
    </location>
</feature>
<feature type="compositionally biased region" description="Polar residues" evidence="1">
    <location>
        <begin position="396"/>
        <end position="417"/>
    </location>
</feature>
<feature type="modified residue" description="Phosphoserine" evidence="4">
    <location>
        <position position="148"/>
    </location>
</feature>
<feature type="modified residue" description="Phosphoserine" evidence="4">
    <location>
        <position position="162"/>
    </location>
</feature>
<protein>
    <recommendedName>
        <fullName evidence="6">Coilin</fullName>
    </recommendedName>
    <alternativeName>
        <fullName evidence="7">Meiotically up-regulated gene 174 protein</fullName>
    </alternativeName>
</protein>
<name>COIL_SCHPO</name>
<comment type="function">
    <text evidence="5">Component of nuclear coiled bodies, also known as Cajal bodies or CBs, which are involved in the modification and assembly of nucleoplasmic snRNPs (PubMed:38828770). Required for proper pre-mRNA splicing (PubMed:38828770).</text>
</comment>
<comment type="subunit">
    <text evidence="5">Interacts with tgs1; both proteins are required to maintain Cajal body integrity (PubMed:38828770). Interacts with U2 and U5 snRNAs (PubMed:38828770).</text>
</comment>
<comment type="subcellular location">
    <subcellularLocation>
        <location evidence="3">Cytoplasm</location>
    </subcellularLocation>
    <subcellularLocation>
        <location evidence="5">Nucleus</location>
        <location evidence="5">Cajal body</location>
    </subcellularLocation>
</comment>
<comment type="disruption phenotype">
    <text evidence="2 5">Leads to abnormal trimethylation of U snRNAs, and defects in pre-mRNA splicing including of genes involved in quiescence, and abnormal Cajal body integrity (PubMed:38828770). Leads to an increase in cnp3/CENP-C protein, lagging chromosomes and abnormal mitotic and meiotic chromosome segregation (PubMed:16303567, PubMed:38828770). Leads to an increase in the RNA level of genes involved in meiosis and rRNA, and a decrease in the RNA level of genes involved in cytoplasmic translation (PubMed:38828770). Decreases mating and sporulation efficiency (PubMed:38828770). Sensitive to cold, to thiabendazole (a microtubule-destabilizing drug) and decreases viability during and transition from quiescence (PubMed:38828770).</text>
</comment>
<comment type="similarity">
    <text evidence="7">Belongs to the coilin family.</text>
</comment>
<sequence length="626" mass="69240">MLLKVSSCEPLVPIKQWIHTSQLDLSDSSSLVADLLYNIIKFNFSGLEDKRAIFTGYESIKRYTIGNEMFLQLAKDGFALPVSMSYGLFLEETDTLELRALPRSEGLHRGCEVLVLRLDSPNELKENIREWSSKFMNSKASQKQQMLSPETMQKVDLAGRASPRYQANDSWISKKRNAPLSSISQYANMPENYALNTKKSKISNENDTIFKANFQQNKYESLHAKQISASDLSLHQEFVSASIVQQPELNSLLTSQSKNSTPSESDSSSSESSSSVSDSSDLSSTSDSSSGDESSDTARQSSSDTISSNNVSVSVSLNTANEFSFPQGTFKAENEAVESEVAPSSSTPPTVEEISYLHYDEPSQYYFSSPSKLSSETTKVHRGCENTEKPSEEGKNFTTPLSDSVESENTWSNTLRSSVEDDNTGVSDDNKKSKLNAEFDGHVNNISVRPPGSGSSATKARNLRRKKARILKRLMQESNDTFSANESTVVANVPDSYLTKNDEEDSASLASLKVAPKYVSHPVSLSSNSFHTEFPIGSLMRFTVMDLNPVTCTPEISEKTGRVVDCSEEKVKIQLDLGDRLDLKFDVNGEVIRNRYGTTPDEELIEGIATYEWSSLSNVHKLELTN</sequence>